<feature type="chain" id="PRO_1000080493" description="Gamma-glutamyl phosphate reductase">
    <location>
        <begin position="1"/>
        <end position="420"/>
    </location>
</feature>
<accession>A8AX77</accession>
<reference key="1">
    <citation type="journal article" date="2007" name="J. Bacteriol.">
        <title>Genome-wide transcriptional changes in Streptococcus gordonii in response to competence signaling peptide.</title>
        <authorList>
            <person name="Vickerman M.M."/>
            <person name="Iobst S."/>
            <person name="Jesionowski A.M."/>
            <person name="Gill S.R."/>
        </authorList>
    </citation>
    <scope>NUCLEOTIDE SEQUENCE [LARGE SCALE GENOMIC DNA]</scope>
    <source>
        <strain>Challis / ATCC 35105 / BCRC 15272 / CH1 / DL1 / V288</strain>
    </source>
</reference>
<comment type="function">
    <text evidence="1">Catalyzes the NADPH-dependent reduction of L-glutamate 5-phosphate into L-glutamate 5-semialdehyde and phosphate. The product spontaneously undergoes cyclization to form 1-pyrroline-5-carboxylate.</text>
</comment>
<comment type="catalytic activity">
    <reaction evidence="1">
        <text>L-glutamate 5-semialdehyde + phosphate + NADP(+) = L-glutamyl 5-phosphate + NADPH + H(+)</text>
        <dbReference type="Rhea" id="RHEA:19541"/>
        <dbReference type="ChEBI" id="CHEBI:15378"/>
        <dbReference type="ChEBI" id="CHEBI:43474"/>
        <dbReference type="ChEBI" id="CHEBI:57783"/>
        <dbReference type="ChEBI" id="CHEBI:58066"/>
        <dbReference type="ChEBI" id="CHEBI:58274"/>
        <dbReference type="ChEBI" id="CHEBI:58349"/>
        <dbReference type="EC" id="1.2.1.41"/>
    </reaction>
</comment>
<comment type="pathway">
    <text evidence="1">Amino-acid biosynthesis; L-proline biosynthesis; L-glutamate 5-semialdehyde from L-glutamate: step 2/2.</text>
</comment>
<comment type="subcellular location">
    <subcellularLocation>
        <location evidence="1">Cytoplasm</location>
    </subcellularLocation>
</comment>
<comment type="similarity">
    <text evidence="1">Belongs to the gamma-glutamyl phosphate reductase family.</text>
</comment>
<organism>
    <name type="scientific">Streptococcus gordonii (strain Challis / ATCC 35105 / BCRC 15272 / CH1 / DL1 / V288)</name>
    <dbReference type="NCBI Taxonomy" id="467705"/>
    <lineage>
        <taxon>Bacteria</taxon>
        <taxon>Bacillati</taxon>
        <taxon>Bacillota</taxon>
        <taxon>Bacilli</taxon>
        <taxon>Lactobacillales</taxon>
        <taxon>Streptococcaceae</taxon>
        <taxon>Streptococcus</taxon>
    </lineage>
</organism>
<dbReference type="EC" id="1.2.1.41" evidence="1"/>
<dbReference type="EMBL" id="CP000725">
    <property type="protein sequence ID" value="ABV09443.1"/>
    <property type="molecule type" value="Genomic_DNA"/>
</dbReference>
<dbReference type="RefSeq" id="WP_012000509.1">
    <property type="nucleotide sequence ID" value="NC_009785.1"/>
</dbReference>
<dbReference type="SMR" id="A8AX77"/>
<dbReference type="STRING" id="467705.SGO_1098"/>
<dbReference type="KEGG" id="sgo:SGO_1098"/>
<dbReference type="eggNOG" id="COG0014">
    <property type="taxonomic scope" value="Bacteria"/>
</dbReference>
<dbReference type="HOGENOM" id="CLU_030231_0_0_9"/>
<dbReference type="UniPathway" id="UPA00098">
    <property type="reaction ID" value="UER00360"/>
</dbReference>
<dbReference type="Proteomes" id="UP000001131">
    <property type="component" value="Chromosome"/>
</dbReference>
<dbReference type="GO" id="GO:0005737">
    <property type="term" value="C:cytoplasm"/>
    <property type="evidence" value="ECO:0007669"/>
    <property type="project" value="UniProtKB-SubCell"/>
</dbReference>
<dbReference type="GO" id="GO:0004350">
    <property type="term" value="F:glutamate-5-semialdehyde dehydrogenase activity"/>
    <property type="evidence" value="ECO:0007669"/>
    <property type="project" value="UniProtKB-UniRule"/>
</dbReference>
<dbReference type="GO" id="GO:0050661">
    <property type="term" value="F:NADP binding"/>
    <property type="evidence" value="ECO:0007669"/>
    <property type="project" value="InterPro"/>
</dbReference>
<dbReference type="GO" id="GO:0055129">
    <property type="term" value="P:L-proline biosynthetic process"/>
    <property type="evidence" value="ECO:0007669"/>
    <property type="project" value="UniProtKB-UniRule"/>
</dbReference>
<dbReference type="CDD" id="cd07079">
    <property type="entry name" value="ALDH_F18-19_ProA-GPR"/>
    <property type="match status" value="1"/>
</dbReference>
<dbReference type="FunFam" id="3.40.309.10:FF:000006">
    <property type="entry name" value="Gamma-glutamyl phosphate reductase"/>
    <property type="match status" value="1"/>
</dbReference>
<dbReference type="Gene3D" id="3.40.605.10">
    <property type="entry name" value="Aldehyde Dehydrogenase, Chain A, domain 1"/>
    <property type="match status" value="1"/>
</dbReference>
<dbReference type="Gene3D" id="3.40.309.10">
    <property type="entry name" value="Aldehyde Dehydrogenase, Chain A, domain 2"/>
    <property type="match status" value="1"/>
</dbReference>
<dbReference type="HAMAP" id="MF_00412">
    <property type="entry name" value="ProA"/>
    <property type="match status" value="1"/>
</dbReference>
<dbReference type="InterPro" id="IPR016161">
    <property type="entry name" value="Ald_DH/histidinol_DH"/>
</dbReference>
<dbReference type="InterPro" id="IPR016163">
    <property type="entry name" value="Ald_DH_C"/>
</dbReference>
<dbReference type="InterPro" id="IPR016162">
    <property type="entry name" value="Ald_DH_N"/>
</dbReference>
<dbReference type="InterPro" id="IPR015590">
    <property type="entry name" value="Aldehyde_DH_dom"/>
</dbReference>
<dbReference type="InterPro" id="IPR020593">
    <property type="entry name" value="G-glutamylP_reductase_CS"/>
</dbReference>
<dbReference type="InterPro" id="IPR012134">
    <property type="entry name" value="Glu-5-SA_DH"/>
</dbReference>
<dbReference type="InterPro" id="IPR000965">
    <property type="entry name" value="GPR_dom"/>
</dbReference>
<dbReference type="NCBIfam" id="NF001221">
    <property type="entry name" value="PRK00197.1"/>
    <property type="match status" value="1"/>
</dbReference>
<dbReference type="NCBIfam" id="TIGR00407">
    <property type="entry name" value="proA"/>
    <property type="match status" value="1"/>
</dbReference>
<dbReference type="PANTHER" id="PTHR11063:SF8">
    <property type="entry name" value="DELTA-1-PYRROLINE-5-CARBOXYLATE SYNTHASE"/>
    <property type="match status" value="1"/>
</dbReference>
<dbReference type="PANTHER" id="PTHR11063">
    <property type="entry name" value="GLUTAMATE SEMIALDEHYDE DEHYDROGENASE"/>
    <property type="match status" value="1"/>
</dbReference>
<dbReference type="Pfam" id="PF00171">
    <property type="entry name" value="Aldedh"/>
    <property type="match status" value="1"/>
</dbReference>
<dbReference type="PIRSF" id="PIRSF000151">
    <property type="entry name" value="GPR"/>
    <property type="match status" value="1"/>
</dbReference>
<dbReference type="SUPFAM" id="SSF53720">
    <property type="entry name" value="ALDH-like"/>
    <property type="match status" value="1"/>
</dbReference>
<dbReference type="PROSITE" id="PS01223">
    <property type="entry name" value="PROA"/>
    <property type="match status" value="1"/>
</dbReference>
<name>PROA_STRGC</name>
<evidence type="ECO:0000255" key="1">
    <source>
        <dbReference type="HAMAP-Rule" id="MF_00412"/>
    </source>
</evidence>
<proteinExistence type="inferred from homology"/>
<protein>
    <recommendedName>
        <fullName evidence="1">Gamma-glutamyl phosphate reductase</fullName>
        <shortName evidence="1">GPR</shortName>
        <ecNumber evidence="1">1.2.1.41</ecNumber>
    </recommendedName>
    <alternativeName>
        <fullName evidence="1">Glutamate-5-semialdehyde dehydrogenase</fullName>
    </alternativeName>
    <alternativeName>
        <fullName evidence="1">Glutamyl-gamma-semialdehyde dehydrogenase</fullName>
        <shortName evidence="1">GSA dehydrogenase</shortName>
    </alternativeName>
</protein>
<keyword id="KW-0028">Amino-acid biosynthesis</keyword>
<keyword id="KW-0963">Cytoplasm</keyword>
<keyword id="KW-0521">NADP</keyword>
<keyword id="KW-0560">Oxidoreductase</keyword>
<keyword id="KW-0641">Proline biosynthesis</keyword>
<keyword id="KW-1185">Reference proteome</keyword>
<sequence length="420" mass="45376">MTSTQAIFEKVQKVKKTINTATTAEKNLALEEMAKQLLISRADILAANELDMTAAKGKISDVMLDRLYLDEERIAAMAEGIRQLIDLEDPVGQVLERTKLDNGLVISKKRVAMGVIGIIYESRPNVTSDAAALALKSGNAVVLRSGKDAYQTALAIVTALKKGLAQTKISPDCIQLVSDTSRASAQAMMKAKGYLDLLIPRGGAGLIQAVVENATVPVIETGTGIVHVYVDKDADQDKALAIIENAKTSRPSVCNAMEVLLVHEEIAAAFLPRLQKILVTDRDAAREKTVELRLDEKAAQYISGSKARPEDFDTEFLDYVLAVKLVSSLEEAVEHIEAHSTHHSDAIVTENDAAAAYFTEQVDSAAVYVNASTRFTDGGQFGLGCEMGISTQKLHARGPMGLKELSSYKYVIQGTGQVRK</sequence>
<gene>
    <name evidence="1" type="primary">proA</name>
    <name type="ordered locus">SGO_1098</name>
</gene>